<accession>P48104</accession>
<protein>
    <recommendedName>
        <fullName evidence="1">Photosystem II CP43 reaction center protein</fullName>
    </recommendedName>
    <alternativeName>
        <fullName evidence="1">PSII 43 kDa protein</fullName>
    </alternativeName>
    <alternativeName>
        <fullName evidence="1">Protein CP-43</fullName>
    </alternativeName>
</protein>
<organism>
    <name type="scientific">Cyanophora paradoxa</name>
    <dbReference type="NCBI Taxonomy" id="2762"/>
    <lineage>
        <taxon>Eukaryota</taxon>
        <taxon>Glaucocystophyceae</taxon>
        <taxon>Cyanophoraceae</taxon>
        <taxon>Cyanophora</taxon>
    </lineage>
</organism>
<geneLocation type="cyanelle"/>
<evidence type="ECO:0000255" key="1">
    <source>
        <dbReference type="HAMAP-Rule" id="MF_01496"/>
    </source>
</evidence>
<evidence type="ECO:0000305" key="2"/>
<gene>
    <name evidence="1" type="primary">psbC</name>
</gene>
<reference key="1">
    <citation type="journal article" date="1995" name="Plant Mol. Biol. Rep.">
        <title>Nucleotide sequence of the cyanelle DNA from Cyanophora paradoxa.</title>
        <authorList>
            <person name="Stirewalt V.L."/>
            <person name="Michalowski C.B."/>
            <person name="Loeffelhardt W."/>
            <person name="Bohnert H.J."/>
            <person name="Bryant D.A."/>
        </authorList>
    </citation>
    <scope>NUCLEOTIDE SEQUENCE [LARGE SCALE GENOMIC DNA]</scope>
    <source>
        <strain>UTEX LB 555 / Pringsheim</strain>
    </source>
</reference>
<reference key="2">
    <citation type="book" date="1997" name="Eukaryotism and symbiosis">
        <title>The complete sequence of the cyanelle genome of Cyanophora paradoxa: the genetic complexity of a primitive plastid.</title>
        <editorList>
            <person name="Schenk H.E.A."/>
            <person name="Herrmann R."/>
            <person name="Jeon K.W."/>
            <person name="Mueller N.E."/>
            <person name="Schwemmler W."/>
        </editorList>
        <authorList>
            <person name="Loeffelhardt W."/>
            <person name="Stirewalt V.L."/>
            <person name="Michalowski C.B."/>
            <person name="Annarella M."/>
            <person name="Farley J.Y."/>
            <person name="Schluchter W.M."/>
            <person name="Chung S."/>
            <person name="Newmann-Spallart C."/>
            <person name="Steiner J.M."/>
            <person name="Jakowitsch J."/>
            <person name="Bohnert H.J."/>
            <person name="Bryant D.A."/>
        </authorList>
    </citation>
    <scope>NUCLEOTIDE SEQUENCE [LARGE SCALE GENOMIC DNA]</scope>
    <source>
        <strain>UTEX LB 555 / Pringsheim</strain>
    </source>
</reference>
<feature type="propeptide" id="PRO_0000431222" evidence="1">
    <location>
        <begin position="1"/>
        <end position="2"/>
    </location>
</feature>
<feature type="chain" id="PRO_0000077512" description="Photosystem II CP43 reaction center protein" evidence="1">
    <location>
        <begin position="3"/>
        <end position="461"/>
    </location>
</feature>
<feature type="transmembrane region" description="Helical" evidence="1">
    <location>
        <begin position="57"/>
        <end position="81"/>
    </location>
</feature>
<feature type="transmembrane region" description="Helical" evidence="1">
    <location>
        <begin position="122"/>
        <end position="143"/>
    </location>
</feature>
<feature type="transmembrane region" description="Helical" evidence="1">
    <location>
        <begin position="166"/>
        <end position="188"/>
    </location>
</feature>
<feature type="transmembrane region" description="Helical" evidence="1">
    <location>
        <begin position="243"/>
        <end position="263"/>
    </location>
</feature>
<feature type="transmembrane region" description="Helical" evidence="1">
    <location>
        <begin position="279"/>
        <end position="300"/>
    </location>
</feature>
<feature type="transmembrane region" description="Helical" evidence="1">
    <location>
        <begin position="435"/>
        <end position="459"/>
    </location>
</feature>
<feature type="binding site" evidence="1">
    <location>
        <position position="355"/>
    </location>
    <ligand>
        <name>[CaMn4O5] cluster</name>
        <dbReference type="ChEBI" id="CHEBI:189552"/>
    </ligand>
</feature>
<feature type="modified residue" description="N-acetylthreonine" evidence="1">
    <location>
        <position position="3"/>
    </location>
</feature>
<feature type="modified residue" description="Phosphothreonine" evidence="1">
    <location>
        <position position="3"/>
    </location>
</feature>
<name>PSBC_CYAPA</name>
<dbReference type="EMBL" id="U30821">
    <property type="protein sequence ID" value="AAA81279.1"/>
    <property type="molecule type" value="Genomic_DNA"/>
</dbReference>
<dbReference type="PIR" id="T06936">
    <property type="entry name" value="T06936"/>
</dbReference>
<dbReference type="RefSeq" id="NP_043248.3">
    <property type="nucleotide sequence ID" value="NC_001675.1"/>
</dbReference>
<dbReference type="SMR" id="P48104"/>
<dbReference type="GeneID" id="801626"/>
<dbReference type="GO" id="GO:0033115">
    <property type="term" value="C:cyanelle thylakoid membrane"/>
    <property type="evidence" value="ECO:0007669"/>
    <property type="project" value="UniProtKB-SubCell"/>
</dbReference>
<dbReference type="GO" id="GO:0009523">
    <property type="term" value="C:photosystem II"/>
    <property type="evidence" value="ECO:0007669"/>
    <property type="project" value="UniProtKB-KW"/>
</dbReference>
<dbReference type="GO" id="GO:0016168">
    <property type="term" value="F:chlorophyll binding"/>
    <property type="evidence" value="ECO:0007669"/>
    <property type="project" value="UniProtKB-UniRule"/>
</dbReference>
<dbReference type="GO" id="GO:0045156">
    <property type="term" value="F:electron transporter, transferring electrons within the cyclic electron transport pathway of photosynthesis activity"/>
    <property type="evidence" value="ECO:0007669"/>
    <property type="project" value="InterPro"/>
</dbReference>
<dbReference type="GO" id="GO:0046872">
    <property type="term" value="F:metal ion binding"/>
    <property type="evidence" value="ECO:0007669"/>
    <property type="project" value="UniProtKB-KW"/>
</dbReference>
<dbReference type="GO" id="GO:0009772">
    <property type="term" value="P:photosynthetic electron transport in photosystem II"/>
    <property type="evidence" value="ECO:0007669"/>
    <property type="project" value="InterPro"/>
</dbReference>
<dbReference type="FunFam" id="1.10.10.670:FF:000001">
    <property type="entry name" value="Photosystem II CP43 reaction center protein"/>
    <property type="match status" value="1"/>
</dbReference>
<dbReference type="Gene3D" id="1.10.10.670">
    <property type="entry name" value="photosystem ii from thermosynechococcus elongatus"/>
    <property type="match status" value="1"/>
</dbReference>
<dbReference type="HAMAP" id="MF_01496">
    <property type="entry name" value="PSII_PsbC_CP43"/>
    <property type="match status" value="1"/>
</dbReference>
<dbReference type="InterPro" id="IPR000932">
    <property type="entry name" value="PS_antenna-like"/>
</dbReference>
<dbReference type="InterPro" id="IPR036001">
    <property type="entry name" value="PS_II_antenna-like_sf"/>
</dbReference>
<dbReference type="InterPro" id="IPR005869">
    <property type="entry name" value="PSII_PsbC"/>
</dbReference>
<dbReference type="InterPro" id="IPR044900">
    <property type="entry name" value="PSII_PsbC_sf"/>
</dbReference>
<dbReference type="NCBIfam" id="TIGR03041">
    <property type="entry name" value="PS_antenn_a_b"/>
    <property type="match status" value="1"/>
</dbReference>
<dbReference type="NCBIfam" id="TIGR01153">
    <property type="entry name" value="psbC"/>
    <property type="match status" value="1"/>
</dbReference>
<dbReference type="Pfam" id="PF00421">
    <property type="entry name" value="PSII"/>
    <property type="match status" value="1"/>
</dbReference>
<dbReference type="SUPFAM" id="SSF161077">
    <property type="entry name" value="Photosystem II antenna protein-like"/>
    <property type="match status" value="1"/>
</dbReference>
<sequence length="461" mass="50402">METLFNSSVAVSGRDQQSTGFAWWSGNARLINLSGKLLGAHVAHAGLIVFWTGAMTLFEVAHFIPEKPMYEQGLILLPHLATLGWGVGPGGEVIDVYPYFVVGVLHLVSSAVLGFGGLYHAIIGPEVLEESFPFFGYDWKDKNKMTTIIGIHLILLGSGALLLVLKAMFFGGVYDTWAPGGGDVRVISNPTLNPTVIFSYITKSPWGGDGWIVSVDNMEDIIGGHIWLAFICIIGGVWHILTKPFSWARRALVWSGEAYLSYSLAALALMGFIANCFVWFNNTAYPSEFFGPTGPEASQAQAFTFLVRDQRLGANVGSAQGPTGLGKYLMRSPSGEIIFGGETMRFWDTRAPWLEPLRGANGLDLTKIKYDIQPWQERRAAEYMTHAPLGSLNSVGGVATEINSVNYVSPRSWLSTSHFVLGFFLFIGHLWHAGRARAASGGFEKGLDRENEPVLSMKLLD</sequence>
<comment type="function">
    <text evidence="1">One of the components of the core complex of photosystem II (PSII). It binds chlorophyll and helps catalyze the primary light-induced photochemical processes of PSII. PSII is a light-driven water:plastoquinone oxidoreductase, using light energy to abstract electrons from H(2)O, generating O(2) and a proton gradient subsequently used for ATP formation.</text>
</comment>
<comment type="cofactor">
    <text evidence="1">Binds multiple chlorophylls and provides some of the ligands for the Ca-4Mn-5O cluster of the oxygen-evolving complex. It may also provide a ligand for a Cl- that is required for oxygen evolution. PSII binds additional chlorophylls, carotenoids and specific lipids.</text>
</comment>
<comment type="subunit">
    <text evidence="1">PSII is composed of 1 copy each of membrane proteins PsbA, PsbB, PsbC, PsbD, PsbE, PsbF, PsbH, PsbI, PsbJ, PsbK, PsbL, PsbM, PsbT, PsbX, PsbY, PsbZ, Psb30/Ycf12, at least 3 peripheral proteins of the oxygen-evolving complex and a large number of cofactors. It forms dimeric complexes.</text>
</comment>
<comment type="subcellular location">
    <subcellularLocation>
        <location evidence="2">Plastid</location>
        <location evidence="2">Cyanelle thylakoid membrane</location>
        <topology evidence="1">Multi-pass membrane protein</topology>
    </subcellularLocation>
</comment>
<comment type="similarity">
    <text evidence="1">Belongs to the PsbB/PsbC family. PsbC subfamily.</text>
</comment>
<keyword id="KW-0007">Acetylation</keyword>
<keyword id="KW-0148">Chlorophyll</keyword>
<keyword id="KW-0157">Chromophore</keyword>
<keyword id="KW-0194">Cyanelle</keyword>
<keyword id="KW-0464">Manganese</keyword>
<keyword id="KW-0472">Membrane</keyword>
<keyword id="KW-0479">Metal-binding</keyword>
<keyword id="KW-0597">Phosphoprotein</keyword>
<keyword id="KW-0602">Photosynthesis</keyword>
<keyword id="KW-0604">Photosystem II</keyword>
<keyword id="KW-0934">Plastid</keyword>
<keyword id="KW-0793">Thylakoid</keyword>
<keyword id="KW-0812">Transmembrane</keyword>
<keyword id="KW-1133">Transmembrane helix</keyword>
<proteinExistence type="inferred from homology"/>